<accession>Q12562</accession>
<reference key="1">
    <citation type="journal article" date="1994" name="Appl. Environ. Microbiol.">
        <title>Cloning, sequencing, and regulation of a xylanase gene from the fungus Aureobasidium pullulans Y-2311-1.</title>
        <authorList>
            <person name="Li X.L."/>
            <person name="Ljungdahl L.G."/>
        </authorList>
    </citation>
    <scope>NUCLEOTIDE SEQUENCE [MRNA]</scope>
    <scope>INDUCTION</scope>
    <source>
        <strain>NRRL Y-2311-1</strain>
    </source>
</reference>
<reference key="2">
    <citation type="submission" date="1997-06" db="EMBL/GenBank/DDBJ databases">
        <title>Genomic Sequence of A. Pullulans xynA locus.</title>
        <authorList>
            <person name="Kernan R.M."/>
            <person name="Li X.-L."/>
            <person name="Ljungdahl L.G."/>
        </authorList>
    </citation>
    <scope>NUCLEOTIDE SEQUENCE [GENOMIC DNA]</scope>
    <source>
        <strain>NRRL Y-2311-1</strain>
    </source>
</reference>
<reference key="3">
    <citation type="journal article" date="1996" name="Appl. Environ. Microbiol.">
        <title>Expression of Aureobasidium pullulans xynA in, and secretion of the xylanase from, Saccharomyces cerevisiae.</title>
        <authorList>
            <person name="Li X.L."/>
            <person name="Ljungdahl L.G."/>
        </authorList>
    </citation>
    <scope>SUBCELLULAR LOCATION</scope>
    <scope>CATALYTIC ACTIVITY</scope>
</reference>
<reference key="4">
    <citation type="journal article" date="1999" name="FEMS Microbiol. Lett.">
        <title>Regulated expression of green fluorescent protein under the control of Aureobasidium pullulans xylanase gene xynA.</title>
        <authorList>
            <person name="Vanden Wymelenberg A."/>
            <person name="Cullen D."/>
            <person name="Spear R."/>
            <person name="Andrews J."/>
        </authorList>
    </citation>
    <scope>INDUCTION</scope>
</reference>
<evidence type="ECO:0000250" key="1"/>
<evidence type="ECO:0000255" key="2"/>
<evidence type="ECO:0000255" key="3">
    <source>
        <dbReference type="PROSITE-ProRule" id="PRU01097"/>
    </source>
</evidence>
<evidence type="ECO:0000255" key="4">
    <source>
        <dbReference type="PROSITE-ProRule" id="PRU10062"/>
    </source>
</evidence>
<evidence type="ECO:0000269" key="5">
    <source>
    </source>
</evidence>
<evidence type="ECO:0000269" key="6">
    <source>
    </source>
</evidence>
<evidence type="ECO:0000269" key="7">
    <source>
    </source>
</evidence>
<evidence type="ECO:0000305" key="8"/>
<organism>
    <name type="scientific">Aureobasidium pullulans</name>
    <name type="common">Black yeast</name>
    <name type="synonym">Pullularia pullulans</name>
    <dbReference type="NCBI Taxonomy" id="5580"/>
    <lineage>
        <taxon>Eukaryota</taxon>
        <taxon>Fungi</taxon>
        <taxon>Dikarya</taxon>
        <taxon>Ascomycota</taxon>
        <taxon>Pezizomycotina</taxon>
        <taxon>Dothideomycetes</taxon>
        <taxon>Dothideomycetidae</taxon>
        <taxon>Dothideales</taxon>
        <taxon>Saccotheciaceae</taxon>
        <taxon>Aureobasidium</taxon>
    </lineage>
</organism>
<feature type="signal peptide" evidence="2">
    <location>
        <begin position="1"/>
        <end position="16"/>
    </location>
</feature>
<feature type="chain" id="PRO_5000053298" description="Endo-1,4-beta-xylanase A">
    <location>
        <begin position="17"/>
        <end position="221"/>
    </location>
</feature>
<feature type="domain" description="GH11" evidence="3">
    <location>
        <begin position="29"/>
        <end position="221"/>
    </location>
</feature>
<feature type="active site" description="Nucleophile" evidence="4">
    <location>
        <position position="114"/>
    </location>
</feature>
<feature type="active site" description="Proton donor" evidence="1">
    <location>
        <position position="208"/>
    </location>
</feature>
<sequence length="221" mass="23531">MKFFATIAALVVGAVAAPVAEAEAEASSPMLIERAGPGGINYVQNYNGNLGQFTYNENAGTYSMYWNNGVNGDFVVGLGWSTGAARSITYSSNYQASGGSYLSVYGWINSPQAEYYIVESYGSYNPCGAGQSGVTQLGTVCSDGATYTVYTDTRTNQPSITGTSTFKQYWSVRQTKRTSGTVTTGNHFAYWAKYGFGNSYNFQVMPVEAFSGTGSASVTVS</sequence>
<proteinExistence type="evidence at protein level"/>
<protein>
    <recommendedName>
        <fullName>Endo-1,4-beta-xylanase A</fullName>
        <shortName>Xylanase A</shortName>
        <ecNumber>3.2.1.8</ecNumber>
    </recommendedName>
    <alternativeName>
        <fullName>1,4-beta-D-xylan xylanohydrolase A</fullName>
    </alternativeName>
</protein>
<gene>
    <name type="primary">xynA</name>
</gene>
<keyword id="KW-0119">Carbohydrate metabolism</keyword>
<keyword id="KW-0326">Glycosidase</keyword>
<keyword id="KW-0378">Hydrolase</keyword>
<keyword id="KW-0624">Polysaccharide degradation</keyword>
<keyword id="KW-0964">Secreted</keyword>
<keyword id="KW-0732">Signal</keyword>
<keyword id="KW-0858">Xylan degradation</keyword>
<name>XYNA_AURPU</name>
<comment type="function">
    <text>Endo-1,4-beta-xylanase involved in the hydrolysis of xylan, a major structural heterogeneous polysaccharide found in plant biomass representing the second most abundant polysaccharide in the biosphere, after cellulose.</text>
</comment>
<comment type="catalytic activity">
    <reaction evidence="7">
        <text>Endohydrolysis of (1-&gt;4)-beta-D-xylosidic linkages in xylans.</text>
        <dbReference type="EC" id="3.2.1.8"/>
    </reaction>
</comment>
<comment type="pathway">
    <text>Glycan degradation; xylan degradation.</text>
</comment>
<comment type="subcellular location">
    <subcellularLocation>
        <location evidence="7">Secreted</location>
    </subcellularLocation>
</comment>
<comment type="induction">
    <text evidence="5 6">Expressed in cultures grown in medium containing D-xylose or oat spelt xylan. Transcription is completely repressed in the presence of glucose.</text>
</comment>
<comment type="similarity">
    <text evidence="8">Belongs to the glycosyl hydrolase 11 (cellulase G) family.</text>
</comment>
<dbReference type="EC" id="3.2.1.8"/>
<dbReference type="EMBL" id="U10298">
    <property type="protein sequence ID" value="AAA67558.1"/>
    <property type="molecule type" value="mRNA"/>
</dbReference>
<dbReference type="EMBL" id="AF011782">
    <property type="protein sequence ID" value="AAC39487.1"/>
    <property type="molecule type" value="Genomic_DNA"/>
</dbReference>
<dbReference type="SMR" id="Q12562"/>
<dbReference type="CAZy" id="GH11">
    <property type="family name" value="Glycoside Hydrolase Family 11"/>
</dbReference>
<dbReference type="UniPathway" id="UPA00114"/>
<dbReference type="GO" id="GO:0005576">
    <property type="term" value="C:extracellular region"/>
    <property type="evidence" value="ECO:0007669"/>
    <property type="project" value="UniProtKB-SubCell"/>
</dbReference>
<dbReference type="GO" id="GO:0031176">
    <property type="term" value="F:endo-1,4-beta-xylanase activity"/>
    <property type="evidence" value="ECO:0007669"/>
    <property type="project" value="UniProtKB-EC"/>
</dbReference>
<dbReference type="GO" id="GO:0045493">
    <property type="term" value="P:xylan catabolic process"/>
    <property type="evidence" value="ECO:0007669"/>
    <property type="project" value="UniProtKB-UniPathway"/>
</dbReference>
<dbReference type="FunFam" id="2.60.120.180:FF:000002">
    <property type="entry name" value="Endo-1,4-beta-xylanase A"/>
    <property type="match status" value="1"/>
</dbReference>
<dbReference type="Gene3D" id="2.60.120.180">
    <property type="match status" value="1"/>
</dbReference>
<dbReference type="InterPro" id="IPR013320">
    <property type="entry name" value="ConA-like_dom_sf"/>
</dbReference>
<dbReference type="InterPro" id="IPR013319">
    <property type="entry name" value="GH11/12"/>
</dbReference>
<dbReference type="InterPro" id="IPR018208">
    <property type="entry name" value="GH11_AS_1"/>
</dbReference>
<dbReference type="InterPro" id="IPR033123">
    <property type="entry name" value="GH11_dom"/>
</dbReference>
<dbReference type="InterPro" id="IPR001137">
    <property type="entry name" value="Glyco_hydro_11"/>
</dbReference>
<dbReference type="PANTHER" id="PTHR46828">
    <property type="entry name" value="ENDO-1,4-BETA-XYLANASE A-RELATED"/>
    <property type="match status" value="1"/>
</dbReference>
<dbReference type="PANTHER" id="PTHR46828:SF2">
    <property type="entry name" value="ENDO-1,4-BETA-XYLANASE A-RELATED"/>
    <property type="match status" value="1"/>
</dbReference>
<dbReference type="Pfam" id="PF00457">
    <property type="entry name" value="Glyco_hydro_11"/>
    <property type="match status" value="1"/>
</dbReference>
<dbReference type="PRINTS" id="PR00911">
    <property type="entry name" value="GLHYDRLASE11"/>
</dbReference>
<dbReference type="SUPFAM" id="SSF49899">
    <property type="entry name" value="Concanavalin A-like lectins/glucanases"/>
    <property type="match status" value="1"/>
</dbReference>
<dbReference type="PROSITE" id="PS00776">
    <property type="entry name" value="GH11_1"/>
    <property type="match status" value="1"/>
</dbReference>
<dbReference type="PROSITE" id="PS51761">
    <property type="entry name" value="GH11_3"/>
    <property type="match status" value="1"/>
</dbReference>